<protein>
    <recommendedName>
        <fullName evidence="1">Ribonuclease 3</fullName>
        <ecNumber evidence="1">3.1.26.3</ecNumber>
    </recommendedName>
    <alternativeName>
        <fullName evidence="1">Ribonuclease III</fullName>
        <shortName evidence="1">RNase III</shortName>
    </alternativeName>
</protein>
<gene>
    <name evidence="1" type="primary">rnc</name>
    <name type="ordered locus">STY2827</name>
    <name type="ordered locus">t0277</name>
</gene>
<feature type="chain" id="PRO_0000180428" description="Ribonuclease 3">
    <location>
        <begin position="1"/>
        <end position="226"/>
    </location>
</feature>
<feature type="domain" description="RNase III" evidence="1">
    <location>
        <begin position="6"/>
        <end position="128"/>
    </location>
</feature>
<feature type="domain" description="DRBM" evidence="1">
    <location>
        <begin position="155"/>
        <end position="225"/>
    </location>
</feature>
<feature type="active site" evidence="1">
    <location>
        <position position="45"/>
    </location>
</feature>
<feature type="active site" evidence="1">
    <location>
        <position position="117"/>
    </location>
</feature>
<feature type="binding site" evidence="1">
    <location>
        <position position="41"/>
    </location>
    <ligand>
        <name>Mg(2+)</name>
        <dbReference type="ChEBI" id="CHEBI:18420"/>
    </ligand>
</feature>
<feature type="binding site" evidence="1">
    <location>
        <position position="114"/>
    </location>
    <ligand>
        <name>Mg(2+)</name>
        <dbReference type="ChEBI" id="CHEBI:18420"/>
    </ligand>
</feature>
<feature type="binding site" evidence="1">
    <location>
        <position position="117"/>
    </location>
    <ligand>
        <name>Mg(2+)</name>
        <dbReference type="ChEBI" id="CHEBI:18420"/>
    </ligand>
</feature>
<feature type="sequence conflict" description="In Ref. 2; AAO68001." evidence="2" ref="2">
    <original>H</original>
    <variation>R</variation>
    <location>
        <position position="167"/>
    </location>
</feature>
<keyword id="KW-0963">Cytoplasm</keyword>
<keyword id="KW-0255">Endonuclease</keyword>
<keyword id="KW-0378">Hydrolase</keyword>
<keyword id="KW-0460">Magnesium</keyword>
<keyword id="KW-0479">Metal-binding</keyword>
<keyword id="KW-0507">mRNA processing</keyword>
<keyword id="KW-0540">Nuclease</keyword>
<keyword id="KW-0694">RNA-binding</keyword>
<keyword id="KW-0698">rRNA processing</keyword>
<keyword id="KW-0699">rRNA-binding</keyword>
<keyword id="KW-0819">tRNA processing</keyword>
<evidence type="ECO:0000255" key="1">
    <source>
        <dbReference type="HAMAP-Rule" id="MF_00104"/>
    </source>
</evidence>
<evidence type="ECO:0000305" key="2"/>
<organism>
    <name type="scientific">Salmonella typhi</name>
    <dbReference type="NCBI Taxonomy" id="90370"/>
    <lineage>
        <taxon>Bacteria</taxon>
        <taxon>Pseudomonadati</taxon>
        <taxon>Pseudomonadota</taxon>
        <taxon>Gammaproteobacteria</taxon>
        <taxon>Enterobacterales</taxon>
        <taxon>Enterobacteriaceae</taxon>
        <taxon>Salmonella</taxon>
    </lineage>
</organism>
<dbReference type="EC" id="3.1.26.3" evidence="1"/>
<dbReference type="EMBL" id="AL513382">
    <property type="protein sequence ID" value="CAD02783.1"/>
    <property type="molecule type" value="Genomic_DNA"/>
</dbReference>
<dbReference type="EMBL" id="AE014613">
    <property type="protein sequence ID" value="AAO68001.1"/>
    <property type="molecule type" value="Genomic_DNA"/>
</dbReference>
<dbReference type="RefSeq" id="NP_457110.1">
    <property type="nucleotide sequence ID" value="NC_003198.1"/>
</dbReference>
<dbReference type="RefSeq" id="WP_010989216.1">
    <property type="nucleotide sequence ID" value="NZ_QXGZ01000067.1"/>
</dbReference>
<dbReference type="SMR" id="Q8Z4K4"/>
<dbReference type="STRING" id="220341.gene:17586717"/>
<dbReference type="KEGG" id="stt:t0277"/>
<dbReference type="KEGG" id="sty:STY2827"/>
<dbReference type="PATRIC" id="fig|220341.7.peg.2875"/>
<dbReference type="eggNOG" id="COG0571">
    <property type="taxonomic scope" value="Bacteria"/>
</dbReference>
<dbReference type="HOGENOM" id="CLU_000907_1_1_6"/>
<dbReference type="OMA" id="LTHKSCK"/>
<dbReference type="Proteomes" id="UP000000541">
    <property type="component" value="Chromosome"/>
</dbReference>
<dbReference type="Proteomes" id="UP000002670">
    <property type="component" value="Chromosome"/>
</dbReference>
<dbReference type="GO" id="GO:0005737">
    <property type="term" value="C:cytoplasm"/>
    <property type="evidence" value="ECO:0007669"/>
    <property type="project" value="UniProtKB-SubCell"/>
</dbReference>
<dbReference type="GO" id="GO:0003725">
    <property type="term" value="F:double-stranded RNA binding"/>
    <property type="evidence" value="ECO:0007669"/>
    <property type="project" value="TreeGrafter"/>
</dbReference>
<dbReference type="GO" id="GO:0046872">
    <property type="term" value="F:metal ion binding"/>
    <property type="evidence" value="ECO:0007669"/>
    <property type="project" value="UniProtKB-KW"/>
</dbReference>
<dbReference type="GO" id="GO:0004525">
    <property type="term" value="F:ribonuclease III activity"/>
    <property type="evidence" value="ECO:0007669"/>
    <property type="project" value="UniProtKB-UniRule"/>
</dbReference>
<dbReference type="GO" id="GO:0019843">
    <property type="term" value="F:rRNA binding"/>
    <property type="evidence" value="ECO:0007669"/>
    <property type="project" value="UniProtKB-KW"/>
</dbReference>
<dbReference type="GO" id="GO:0006397">
    <property type="term" value="P:mRNA processing"/>
    <property type="evidence" value="ECO:0007669"/>
    <property type="project" value="UniProtKB-UniRule"/>
</dbReference>
<dbReference type="GO" id="GO:0010468">
    <property type="term" value="P:regulation of gene expression"/>
    <property type="evidence" value="ECO:0007669"/>
    <property type="project" value="TreeGrafter"/>
</dbReference>
<dbReference type="GO" id="GO:0006364">
    <property type="term" value="P:rRNA processing"/>
    <property type="evidence" value="ECO:0007669"/>
    <property type="project" value="UniProtKB-UniRule"/>
</dbReference>
<dbReference type="GO" id="GO:0008033">
    <property type="term" value="P:tRNA processing"/>
    <property type="evidence" value="ECO:0007669"/>
    <property type="project" value="UniProtKB-KW"/>
</dbReference>
<dbReference type="CDD" id="cd10845">
    <property type="entry name" value="DSRM_RNAse_III_family"/>
    <property type="match status" value="1"/>
</dbReference>
<dbReference type="CDD" id="cd00593">
    <property type="entry name" value="RIBOc"/>
    <property type="match status" value="1"/>
</dbReference>
<dbReference type="FunFam" id="1.10.1520.10:FF:000001">
    <property type="entry name" value="Ribonuclease 3"/>
    <property type="match status" value="1"/>
</dbReference>
<dbReference type="FunFam" id="3.30.160.20:FF:000003">
    <property type="entry name" value="Ribonuclease 3"/>
    <property type="match status" value="1"/>
</dbReference>
<dbReference type="Gene3D" id="3.30.160.20">
    <property type="match status" value="1"/>
</dbReference>
<dbReference type="Gene3D" id="1.10.1520.10">
    <property type="entry name" value="Ribonuclease III domain"/>
    <property type="match status" value="1"/>
</dbReference>
<dbReference type="HAMAP" id="MF_00104">
    <property type="entry name" value="RNase_III"/>
    <property type="match status" value="1"/>
</dbReference>
<dbReference type="InterPro" id="IPR014720">
    <property type="entry name" value="dsRBD_dom"/>
</dbReference>
<dbReference type="InterPro" id="IPR011907">
    <property type="entry name" value="RNase_III"/>
</dbReference>
<dbReference type="InterPro" id="IPR000999">
    <property type="entry name" value="RNase_III_dom"/>
</dbReference>
<dbReference type="InterPro" id="IPR036389">
    <property type="entry name" value="RNase_III_sf"/>
</dbReference>
<dbReference type="NCBIfam" id="TIGR02191">
    <property type="entry name" value="RNaseIII"/>
    <property type="match status" value="1"/>
</dbReference>
<dbReference type="PANTHER" id="PTHR11207:SF0">
    <property type="entry name" value="RIBONUCLEASE 3"/>
    <property type="match status" value="1"/>
</dbReference>
<dbReference type="PANTHER" id="PTHR11207">
    <property type="entry name" value="RIBONUCLEASE III"/>
    <property type="match status" value="1"/>
</dbReference>
<dbReference type="Pfam" id="PF00035">
    <property type="entry name" value="dsrm"/>
    <property type="match status" value="1"/>
</dbReference>
<dbReference type="Pfam" id="PF14622">
    <property type="entry name" value="Ribonucleas_3_3"/>
    <property type="match status" value="1"/>
</dbReference>
<dbReference type="SMART" id="SM00358">
    <property type="entry name" value="DSRM"/>
    <property type="match status" value="1"/>
</dbReference>
<dbReference type="SMART" id="SM00535">
    <property type="entry name" value="RIBOc"/>
    <property type="match status" value="1"/>
</dbReference>
<dbReference type="SUPFAM" id="SSF54768">
    <property type="entry name" value="dsRNA-binding domain-like"/>
    <property type="match status" value="1"/>
</dbReference>
<dbReference type="SUPFAM" id="SSF69065">
    <property type="entry name" value="RNase III domain-like"/>
    <property type="match status" value="1"/>
</dbReference>
<dbReference type="PROSITE" id="PS50137">
    <property type="entry name" value="DS_RBD"/>
    <property type="match status" value="1"/>
</dbReference>
<dbReference type="PROSITE" id="PS00517">
    <property type="entry name" value="RNASE_3_1"/>
    <property type="match status" value="1"/>
</dbReference>
<dbReference type="PROSITE" id="PS50142">
    <property type="entry name" value="RNASE_3_2"/>
    <property type="match status" value="1"/>
</dbReference>
<comment type="function">
    <text evidence="1">Digests double-stranded RNA. Involved in the processing of primary rRNA transcript to yield the immediate precursors to the large and small rRNAs (23S and 16S). Processes some mRNAs, and tRNAs when they are encoded in the rRNA operon. Processes pre-crRNA and tracrRNA of type II CRISPR loci if present in the organism.</text>
</comment>
<comment type="catalytic activity">
    <reaction evidence="1">
        <text>Endonucleolytic cleavage to 5'-phosphomonoester.</text>
        <dbReference type="EC" id="3.1.26.3"/>
    </reaction>
</comment>
<comment type="cofactor">
    <cofactor evidence="1">
        <name>Mg(2+)</name>
        <dbReference type="ChEBI" id="CHEBI:18420"/>
    </cofactor>
</comment>
<comment type="subunit">
    <text evidence="1">Homodimer.</text>
</comment>
<comment type="subcellular location">
    <subcellularLocation>
        <location evidence="1">Cytoplasm</location>
    </subcellularLocation>
</comment>
<comment type="similarity">
    <text evidence="1">Belongs to the ribonuclease III family.</text>
</comment>
<sequence>MNPIVINRLQRKLGYTFNHQELLQQALTHRSASSKHNERLEFLGDSILSFVIANALYHRFPRVDEGDMSRMRATLVRGNTLAELAREFDLGECLRLGPGELKSGGFRRESILADTVEALIGGVFLDSNIQTVEQLILNWYKTRLDEISPGDKQKDPKTRLQEYLQGHHLPLPSYLVVQVRGEAHDQEFTIHCQVSGLSEPVVGTGSSRRKAEQAAAEQALKKLELE</sequence>
<reference key="1">
    <citation type="journal article" date="2001" name="Nature">
        <title>Complete genome sequence of a multiple drug resistant Salmonella enterica serovar Typhi CT18.</title>
        <authorList>
            <person name="Parkhill J."/>
            <person name="Dougan G."/>
            <person name="James K.D."/>
            <person name="Thomson N.R."/>
            <person name="Pickard D."/>
            <person name="Wain J."/>
            <person name="Churcher C.M."/>
            <person name="Mungall K.L."/>
            <person name="Bentley S.D."/>
            <person name="Holden M.T.G."/>
            <person name="Sebaihia M."/>
            <person name="Baker S."/>
            <person name="Basham D."/>
            <person name="Brooks K."/>
            <person name="Chillingworth T."/>
            <person name="Connerton P."/>
            <person name="Cronin A."/>
            <person name="Davis P."/>
            <person name="Davies R.M."/>
            <person name="Dowd L."/>
            <person name="White N."/>
            <person name="Farrar J."/>
            <person name="Feltwell T."/>
            <person name="Hamlin N."/>
            <person name="Haque A."/>
            <person name="Hien T.T."/>
            <person name="Holroyd S."/>
            <person name="Jagels K."/>
            <person name="Krogh A."/>
            <person name="Larsen T.S."/>
            <person name="Leather S."/>
            <person name="Moule S."/>
            <person name="O'Gaora P."/>
            <person name="Parry C."/>
            <person name="Quail M.A."/>
            <person name="Rutherford K.M."/>
            <person name="Simmonds M."/>
            <person name="Skelton J."/>
            <person name="Stevens K."/>
            <person name="Whitehead S."/>
            <person name="Barrell B.G."/>
        </authorList>
    </citation>
    <scope>NUCLEOTIDE SEQUENCE [LARGE SCALE GENOMIC DNA]</scope>
    <source>
        <strain>CT18</strain>
    </source>
</reference>
<reference key="2">
    <citation type="journal article" date="2003" name="J. Bacteriol.">
        <title>Comparative genomics of Salmonella enterica serovar Typhi strains Ty2 and CT18.</title>
        <authorList>
            <person name="Deng W."/>
            <person name="Liou S.-R."/>
            <person name="Plunkett G. III"/>
            <person name="Mayhew G.F."/>
            <person name="Rose D.J."/>
            <person name="Burland V."/>
            <person name="Kodoyianni V."/>
            <person name="Schwartz D.C."/>
            <person name="Blattner F.R."/>
        </authorList>
    </citation>
    <scope>NUCLEOTIDE SEQUENCE [LARGE SCALE GENOMIC DNA]</scope>
    <source>
        <strain>ATCC 700931 / Ty2</strain>
    </source>
</reference>
<accession>Q8Z4K4</accession>
<name>RNC_SALTI</name>
<proteinExistence type="inferred from homology"/>